<reference key="1">
    <citation type="submission" date="2008-01" db="EMBL/GenBank/DDBJ databases">
        <title>Complete sequence of Pseudomonas putida GB-1.</title>
        <authorList>
            <consortium name="US DOE Joint Genome Institute"/>
            <person name="Copeland A."/>
            <person name="Lucas S."/>
            <person name="Lapidus A."/>
            <person name="Barry K."/>
            <person name="Glavina del Rio T."/>
            <person name="Dalin E."/>
            <person name="Tice H."/>
            <person name="Pitluck S."/>
            <person name="Bruce D."/>
            <person name="Goodwin L."/>
            <person name="Chertkov O."/>
            <person name="Brettin T."/>
            <person name="Detter J.C."/>
            <person name="Han C."/>
            <person name="Kuske C.R."/>
            <person name="Schmutz J."/>
            <person name="Larimer F."/>
            <person name="Land M."/>
            <person name="Hauser L."/>
            <person name="Kyrpides N."/>
            <person name="Kim E."/>
            <person name="McCarthy J.K."/>
            <person name="Richardson P."/>
        </authorList>
    </citation>
    <scope>NUCLEOTIDE SEQUENCE [LARGE SCALE GENOMIC DNA]</scope>
    <source>
        <strain>GB-1</strain>
    </source>
</reference>
<gene>
    <name evidence="1" type="primary">gatA</name>
    <name type="ordered locus">PputGB1_0938</name>
</gene>
<dbReference type="EC" id="6.3.5.7" evidence="1"/>
<dbReference type="EMBL" id="CP000926">
    <property type="protein sequence ID" value="ABY96848.1"/>
    <property type="molecule type" value="Genomic_DNA"/>
</dbReference>
<dbReference type="RefSeq" id="WP_012270639.1">
    <property type="nucleotide sequence ID" value="NC_010322.1"/>
</dbReference>
<dbReference type="SMR" id="B0KQG0"/>
<dbReference type="KEGG" id="ppg:PputGB1_0938"/>
<dbReference type="eggNOG" id="COG0154">
    <property type="taxonomic scope" value="Bacteria"/>
</dbReference>
<dbReference type="HOGENOM" id="CLU_009600_0_3_6"/>
<dbReference type="Proteomes" id="UP000002157">
    <property type="component" value="Chromosome"/>
</dbReference>
<dbReference type="GO" id="GO:0030956">
    <property type="term" value="C:glutamyl-tRNA(Gln) amidotransferase complex"/>
    <property type="evidence" value="ECO:0007669"/>
    <property type="project" value="InterPro"/>
</dbReference>
<dbReference type="GO" id="GO:0005524">
    <property type="term" value="F:ATP binding"/>
    <property type="evidence" value="ECO:0007669"/>
    <property type="project" value="UniProtKB-KW"/>
</dbReference>
<dbReference type="GO" id="GO:0050567">
    <property type="term" value="F:glutaminyl-tRNA synthase (glutamine-hydrolyzing) activity"/>
    <property type="evidence" value="ECO:0007669"/>
    <property type="project" value="UniProtKB-UniRule"/>
</dbReference>
<dbReference type="GO" id="GO:0006412">
    <property type="term" value="P:translation"/>
    <property type="evidence" value="ECO:0007669"/>
    <property type="project" value="UniProtKB-UniRule"/>
</dbReference>
<dbReference type="Gene3D" id="3.90.1300.10">
    <property type="entry name" value="Amidase signature (AS) domain"/>
    <property type="match status" value="1"/>
</dbReference>
<dbReference type="HAMAP" id="MF_00120">
    <property type="entry name" value="GatA"/>
    <property type="match status" value="1"/>
</dbReference>
<dbReference type="InterPro" id="IPR000120">
    <property type="entry name" value="Amidase"/>
</dbReference>
<dbReference type="InterPro" id="IPR020556">
    <property type="entry name" value="Amidase_CS"/>
</dbReference>
<dbReference type="InterPro" id="IPR023631">
    <property type="entry name" value="Amidase_dom"/>
</dbReference>
<dbReference type="InterPro" id="IPR036928">
    <property type="entry name" value="AS_sf"/>
</dbReference>
<dbReference type="InterPro" id="IPR004412">
    <property type="entry name" value="GatA"/>
</dbReference>
<dbReference type="NCBIfam" id="TIGR00132">
    <property type="entry name" value="gatA"/>
    <property type="match status" value="1"/>
</dbReference>
<dbReference type="PANTHER" id="PTHR11895:SF151">
    <property type="entry name" value="GLUTAMYL-TRNA(GLN) AMIDOTRANSFERASE SUBUNIT A"/>
    <property type="match status" value="1"/>
</dbReference>
<dbReference type="PANTHER" id="PTHR11895">
    <property type="entry name" value="TRANSAMIDASE"/>
    <property type="match status" value="1"/>
</dbReference>
<dbReference type="Pfam" id="PF01425">
    <property type="entry name" value="Amidase"/>
    <property type="match status" value="1"/>
</dbReference>
<dbReference type="SUPFAM" id="SSF75304">
    <property type="entry name" value="Amidase signature (AS) enzymes"/>
    <property type="match status" value="1"/>
</dbReference>
<dbReference type="PROSITE" id="PS00571">
    <property type="entry name" value="AMIDASES"/>
    <property type="match status" value="1"/>
</dbReference>
<organism>
    <name type="scientific">Pseudomonas putida (strain GB-1)</name>
    <dbReference type="NCBI Taxonomy" id="76869"/>
    <lineage>
        <taxon>Bacteria</taxon>
        <taxon>Pseudomonadati</taxon>
        <taxon>Pseudomonadota</taxon>
        <taxon>Gammaproteobacteria</taxon>
        <taxon>Pseudomonadales</taxon>
        <taxon>Pseudomonadaceae</taxon>
        <taxon>Pseudomonas</taxon>
    </lineage>
</organism>
<name>GATA_PSEPG</name>
<comment type="function">
    <text evidence="1">Allows the formation of correctly charged Gln-tRNA(Gln) through the transamidation of misacylated Glu-tRNA(Gln) in organisms which lack glutaminyl-tRNA synthetase. The reaction takes place in the presence of glutamine and ATP through an activated gamma-phospho-Glu-tRNA(Gln).</text>
</comment>
<comment type="catalytic activity">
    <reaction evidence="1">
        <text>L-glutamyl-tRNA(Gln) + L-glutamine + ATP + H2O = L-glutaminyl-tRNA(Gln) + L-glutamate + ADP + phosphate + H(+)</text>
        <dbReference type="Rhea" id="RHEA:17521"/>
        <dbReference type="Rhea" id="RHEA-COMP:9681"/>
        <dbReference type="Rhea" id="RHEA-COMP:9684"/>
        <dbReference type="ChEBI" id="CHEBI:15377"/>
        <dbReference type="ChEBI" id="CHEBI:15378"/>
        <dbReference type="ChEBI" id="CHEBI:29985"/>
        <dbReference type="ChEBI" id="CHEBI:30616"/>
        <dbReference type="ChEBI" id="CHEBI:43474"/>
        <dbReference type="ChEBI" id="CHEBI:58359"/>
        <dbReference type="ChEBI" id="CHEBI:78520"/>
        <dbReference type="ChEBI" id="CHEBI:78521"/>
        <dbReference type="ChEBI" id="CHEBI:456216"/>
        <dbReference type="EC" id="6.3.5.7"/>
    </reaction>
</comment>
<comment type="subunit">
    <text evidence="1">Heterotrimer of A, B and C subunits.</text>
</comment>
<comment type="similarity">
    <text evidence="1">Belongs to the amidase family. GatA subfamily.</text>
</comment>
<feature type="chain" id="PRO_1000076138" description="Glutamyl-tRNA(Gln) amidotransferase subunit A">
    <location>
        <begin position="1"/>
        <end position="483"/>
    </location>
</feature>
<feature type="active site" description="Charge relay system" evidence="1">
    <location>
        <position position="76"/>
    </location>
</feature>
<feature type="active site" description="Charge relay system" evidence="1">
    <location>
        <position position="151"/>
    </location>
</feature>
<feature type="active site" description="Acyl-ester intermediate" evidence="1">
    <location>
        <position position="175"/>
    </location>
</feature>
<accession>B0KQG0</accession>
<keyword id="KW-0067">ATP-binding</keyword>
<keyword id="KW-0436">Ligase</keyword>
<keyword id="KW-0547">Nucleotide-binding</keyword>
<keyword id="KW-0648">Protein biosynthesis</keyword>
<sequence length="483" mass="51676">MHQFTLAEIARGLADKSFSSEELTRALLARIKQLDPQINSFISVTEDLALGQARAADARRAAGETGALLGAPIAHKDLFCTNGVRTSCGSKMLDNFKAPYDATVVAKLAEAGMVTLGKTNMDEFAMGSANESSHYGAVKNPWNLEHVPGGSSGGSAAAVAARLLPATTGTDTGGSIRQPAALTNLTGLKPTYGRVSRWGMIAYASSLDQGGPLARTAEDCALLLQGMAGFDAKDSTSIEEPVPDYSANLNASLQGLRIGLPKEYFGAGLDPRIAELVQASVKELEKLGAVVKEISLPNMQHAIPAYYVIAPAEASSNLSRFDGVRFGYRCEEPKDLTDLYKRSRGEGFGVEVQRRIMVGTYALSAGYYDAYYVKAQQIRRLIKNDFMAAFNDVDLILGPTTPNPAWKLGAKSSDPVAAYLEDVYTINANLAGLPGLSMPAGFVDGLPVGVQLLAPYFQEGRLLNVAHRYQQVTDWHTRAPNGF</sequence>
<protein>
    <recommendedName>
        <fullName evidence="1">Glutamyl-tRNA(Gln) amidotransferase subunit A</fullName>
        <shortName evidence="1">Glu-ADT subunit A</shortName>
        <ecNumber evidence="1">6.3.5.7</ecNumber>
    </recommendedName>
</protein>
<proteinExistence type="inferred from homology"/>
<evidence type="ECO:0000255" key="1">
    <source>
        <dbReference type="HAMAP-Rule" id="MF_00120"/>
    </source>
</evidence>